<reference key="1">
    <citation type="journal article" date="1998" name="Biochim. Biophys. Acta">
        <title>Molecular cloning of cDNAs encoding alpha1, alpha2, and beta subunits of rat brain platelet-activating factor acetylhydrolase.</title>
        <authorList>
            <person name="Watanabe M."/>
            <person name="Aoki J."/>
            <person name="Manya H."/>
            <person name="Arai H."/>
            <person name="Inoue K."/>
        </authorList>
    </citation>
    <scope>NUCLEOTIDE SEQUENCE [MRNA]</scope>
    <scope>TISSUE SPECIFICITY</scope>
    <source>
        <strain>Wistar</strain>
        <tissue>Brain</tissue>
    </source>
</reference>
<reference key="2">
    <citation type="journal article" date="2004" name="Genome Res.">
        <title>The status, quality, and expansion of the NIH full-length cDNA project: the Mammalian Gene Collection (MGC).</title>
        <authorList>
            <consortium name="The MGC Project Team"/>
        </authorList>
    </citation>
    <scope>NUCLEOTIDE SEQUENCE [LARGE SCALE MRNA]</scope>
    <source>
        <tissue>Heart</tissue>
    </source>
</reference>
<reference key="3">
    <citation type="journal article" date="1998" name="J. Biol. Chem.">
        <title>Switching of platelet-activating factor acetylhydrolase catalytic subunits in developing rat brain.</title>
        <authorList>
            <person name="Manya H."/>
            <person name="Aoki J."/>
            <person name="Watanabe M."/>
            <person name="Adachi T."/>
            <person name="Asou H."/>
            <person name="Inoue Y."/>
            <person name="Arai H."/>
            <person name="Inoue K."/>
        </authorList>
    </citation>
    <scope>TISSUE SPECIFICITY</scope>
    <scope>DEVELOPMENTAL STAGE</scope>
</reference>
<reference key="4">
    <citation type="journal article" date="2000" name="Hum. Mol. Genet.">
        <title>Interaction between LIS1 and doublecortin, two lissencephaly gene products.</title>
        <authorList>
            <person name="Caspi M."/>
            <person name="Atlas R."/>
            <person name="Kantor A."/>
            <person name="Sapir T."/>
            <person name="Reiner O."/>
        </authorList>
    </citation>
    <scope>SUBCELLULAR LOCATION</scope>
</reference>
<reference key="5">
    <citation type="journal article" date="2000" name="Nat. Cell Biol.">
        <title>Regulation of cytoplasmic dynein behaviour and microtubule organization by mammalian Lis1.</title>
        <authorList>
            <person name="Smith D.S."/>
            <person name="Niethammer M."/>
            <person name="Ayala R."/>
            <person name="Zhou Y."/>
            <person name="Gambello M.J."/>
            <person name="Wynshaw-Boris A."/>
            <person name="Tsai L.-H."/>
        </authorList>
    </citation>
    <scope>SUBCELLULAR LOCATION</scope>
</reference>
<reference key="6">
    <citation type="journal article" date="2000" name="Nat. Cell Biol.">
        <title>A role for the lissencephaly gene LIS1 in mitosis and cytoplasmic dynein function.</title>
        <authorList>
            <person name="Faulkner N.E."/>
            <person name="Dujardin D.L."/>
            <person name="Tai C.-Y."/>
            <person name="Vaughan K.T."/>
            <person name="O'Connell C.B."/>
            <person name="Wang Y.-L."/>
            <person name="Vallee R.B."/>
        </authorList>
    </citation>
    <scope>FUNCTION</scope>
</reference>
<reference key="7">
    <citation type="journal article" date="2000" name="Neuron">
        <title>NUDEL is a novel cdk5 substrate that associates with LIS1 and cytoplasmic dynein.</title>
        <authorList>
            <person name="Niethammer M."/>
            <person name="Smith D.S."/>
            <person name="Ayala R."/>
            <person name="Peng J."/>
            <person name="Ko J."/>
            <person name="Lee M.-S."/>
            <person name="Morabito M."/>
            <person name="Tsai L.-H."/>
        </authorList>
    </citation>
    <scope>INTERACTION WITH NDEL1 AND DYNEIN</scope>
    <source>
        <tissue>Brain</tissue>
    </source>
</reference>
<reference key="8">
    <citation type="journal article" date="2005" name="J. Cell Biol.">
        <title>LIS1 RNA interference blocks neural stem cell division, morphogenesis, and motility at multiple stages.</title>
        <authorList>
            <person name="Tsai J.-W."/>
            <person name="Chen Y."/>
            <person name="Kriegstein A.R."/>
            <person name="Vallee R.B."/>
        </authorList>
    </citation>
    <scope>FUNCTION</scope>
</reference>
<reference key="9">
    <citation type="journal article" date="2006" name="J. Neurosci.">
        <title>Regulation of cytoplasmic dynein ATPase by Lis1.</title>
        <authorList>
            <person name="Mesngon M.T."/>
            <person name="Tarricone C."/>
            <person name="Hebbar S."/>
            <person name="Guillotte A.M."/>
            <person name="Schmitt E.W."/>
            <person name="Lanier L."/>
            <person name="Musacchio A."/>
            <person name="King S.J."/>
            <person name="Smith D.S."/>
        </authorList>
    </citation>
    <scope>INTERACTION WITH DYNEIN</scope>
    <scope>SUBCELLULAR LOCATION</scope>
</reference>
<protein>
    <recommendedName>
        <fullName evidence="7 16">Platelet-activating factor acetylhydrolase IB subunit alpha</fullName>
    </recommendedName>
    <alternativeName>
        <fullName evidence="7">Lissencephaly-1 protein</fullName>
        <shortName evidence="7">LIS-1</shortName>
    </alternativeName>
    <alternativeName>
        <fullName evidence="7">PAF acetylhydrolase 45 kDa subunit</fullName>
        <shortName evidence="7">PAF-AH 45 kDa subunit</shortName>
    </alternativeName>
    <alternativeName>
        <fullName evidence="7">PAF-AH alpha</fullName>
        <shortName evidence="7">PAFAH alpha</shortName>
    </alternativeName>
</protein>
<comment type="function">
    <text evidence="1 2 3 10 12">Regulatory subunit (beta subunit) of the cytosolic type I platelet-activating factor (PAF) acetylhydrolase (PAF-AH (I)), an enzyme that catalyzes the hydrolyze of the acetyl group at the sn-2 position of PAF and its analogs and participates in PAF inactivation. Regulates the PAF-AH (I) activity in a catalytic dimer composition-dependent manner (By similarity). Required for proper activation of Rho GTPases and actin polymerization at the leading edge of locomoting cerebellar neurons and postmigratory hippocampal neurons in response to calcium influx triggered via NMDA receptors. Positively regulates the activity of the minus-end directed microtubule motor protein dynein. May enhance dynein-mediated microtubule sliding by targeting dynein to the microtubule plus end. Required for several dynein- and microtubule-dependent processes such as the maintenance of Golgi integrity, the peripheral transport of microtubule fragments and the coupling of the nucleus and centrosome. Required during brain development for the proliferation of neuronal precursors and the migration of newly formed neurons from the ventricular/subventricular zone toward the cortical plate. Neuronal migration involves a process called nucleokinesis, whereby migrating cells extend an anterior process into which the nucleus subsequently translocates. During nucleokinesis dynein at the nuclear surface may translocate the nucleus towards the centrosome by exerting force on centrosomal microtubules. May also play a role in other forms of cell locomotion including the migration of fibroblasts during wound healing. Required for dynein recruitment to microtubule plus ends and BICD2-bound cargos (By similarity). May modulate the Reelin pathway through interaction of the PAF-AH (I) catalytic dimer with VLDLR (By similarity).</text>
</comment>
<comment type="subunit">
    <text evidence="1 2 3 11 13">Can self-associate. Component of the cytosolic PAF-AH (I) heterotetrameric enzyme, which is composed of PAFAH1B1 (beta), PAFAH1B2 (alpha2) and PAFAH1B3 (alpha1) subunits. The catalytic activity of the enzyme resides in the alpha1 (PAFAH1B3) and alpha2 (PAFAH1B2) subunits, whereas the beta subunit (PAFAH1B1) has regulatory activity. Trimer formation is not essential for the catalytic activity. Interacts with the catalytic dimer of PAF-AH (I) heterotetrameric enzyme: interacts with PAFAH1B2 homodimer (alpha2/alpha2 homodimer), PAFAH1B3 homodimer (alpha1/alpha1 homodimer) and PAFAH1B2-PAFAH1B3 heterodimer (alpha2/alpha1 heterodimer) (By similarity). Interacts with DCX, dynactin, IQGAP1, KATNB1, NDE1, NUDC and RSN. Interacts with DISC1, and this interaction is enhanced by NDEL1. Interacts with DAB1 when DAB1 is phosphorylated in response to RELN/reelin signaling. Interacts with dynein and NDEL1 (PubMed:11163260, PubMed:16481446). Interacts with INTS13. Interacts with DCDC1 (By similarity).</text>
</comment>
<comment type="subcellular location">
    <subcellularLocation>
        <location evidence="7">Cytoplasm</location>
        <location evidence="7">Cytoskeleton</location>
    </subcellularLocation>
    <subcellularLocation>
        <location evidence="7">Cytoplasm</location>
        <location evidence="7">Cytoskeleton</location>
        <location evidence="7">Microtubule organizing center</location>
        <location evidence="7">Centrosome</location>
    </subcellularLocation>
    <subcellularLocation>
        <location evidence="7">Cytoplasm</location>
        <location evidence="7">Cytoskeleton</location>
        <location evidence="7">Spindle</location>
    </subcellularLocation>
    <subcellularLocation>
        <location evidence="7">Nucleus membrane</location>
    </subcellularLocation>
    <text evidence="7 8 9 13">Localizes to the plus end of microtubules and to the centrosome. May localize to the nuclear membrane. Also localizes to the microtubules of the manchette in elongating spermatids and to the meiotic spindle in spermatocytes (By similarity). Redistributes to axons during neuronal development.</text>
</comment>
<comment type="tissue specificity">
    <text evidence="14 15">Expressed in most tissues, with highest expression in brain. Expressed in fetal and adult brain. In neural cells, expressed in granule cells, astroglial cells, and oligodendrocytes (PubMed:9660828).</text>
</comment>
<comment type="developmental stage">
    <text evidence="15">During the embryonic stages, high expressed in the brain, spinal cord, sensory ganglia (dorsal root and trigeminal ganglia), and thymus. In brain found throughout the ventricular and marginal zones.</text>
</comment>
<comment type="domain">
    <text evidence="7">Dimerization mediated by the LisH domain may be required to activate dynein.</text>
</comment>
<comment type="miscellaneous">
    <text evidence="2 4 5 6">Originally the subunits of the type I platelet-activating factor (PAF) acetylhydrolase was named alpha (PAFAH1B1), beta (PAFAH1B2) and gamma (PAFAH1B3) (By similarity). Now these subunits have been renamed beta (PAFAH1B1), alpha2 (PAFAH1B2) and alpha1 (PAFAH1B3) respectively (By similarity).</text>
</comment>
<comment type="similarity">
    <text evidence="7">Belongs to the WD repeat LIS1/nudF family.</text>
</comment>
<accession>P63004</accession>
<accession>O35592</accession>
<accession>P43035</accession>
<accession>P81692</accession>
<accession>Q9R2A6</accession>
<evidence type="ECO:0000250" key="1">
    <source>
        <dbReference type="UniProtKB" id="P43033"/>
    </source>
</evidence>
<evidence type="ECO:0000250" key="2">
    <source>
        <dbReference type="UniProtKB" id="P43034"/>
    </source>
</evidence>
<evidence type="ECO:0000250" key="3">
    <source>
        <dbReference type="UniProtKB" id="P63005"/>
    </source>
</evidence>
<evidence type="ECO:0000250" key="4">
    <source>
        <dbReference type="UniProtKB" id="P68402"/>
    </source>
</evidence>
<evidence type="ECO:0000250" key="5">
    <source>
        <dbReference type="UniProtKB" id="Q15102"/>
    </source>
</evidence>
<evidence type="ECO:0000250" key="6">
    <source>
        <dbReference type="UniProtKB" id="Q29460"/>
    </source>
</evidence>
<evidence type="ECO:0000255" key="7">
    <source>
        <dbReference type="HAMAP-Rule" id="MF_03141"/>
    </source>
</evidence>
<evidence type="ECO:0000269" key="8">
    <source>
    </source>
</evidence>
<evidence type="ECO:0000269" key="9">
    <source>
    </source>
</evidence>
<evidence type="ECO:0000269" key="10">
    <source>
    </source>
</evidence>
<evidence type="ECO:0000269" key="11">
    <source>
    </source>
</evidence>
<evidence type="ECO:0000269" key="12">
    <source>
    </source>
</evidence>
<evidence type="ECO:0000269" key="13">
    <source>
    </source>
</evidence>
<evidence type="ECO:0000269" key="14">
    <source>
    </source>
</evidence>
<evidence type="ECO:0000269" key="15">
    <source>
    </source>
</evidence>
<evidence type="ECO:0000305" key="16"/>
<evidence type="ECO:0000312" key="17">
    <source>
        <dbReference type="RGD" id="620331"/>
    </source>
</evidence>
<feature type="chain" id="PRO_0000051065" description="Platelet-activating factor acetylhydrolase IB subunit alpha">
    <location>
        <begin position="1"/>
        <end position="410"/>
    </location>
</feature>
<feature type="domain" description="LisH" evidence="7">
    <location>
        <begin position="7"/>
        <end position="39"/>
    </location>
</feature>
<feature type="repeat" description="WD 1">
    <location>
        <begin position="106"/>
        <end position="147"/>
    </location>
</feature>
<feature type="repeat" description="WD 2">
    <location>
        <begin position="148"/>
        <end position="187"/>
    </location>
</feature>
<feature type="repeat" description="WD 3">
    <location>
        <begin position="190"/>
        <end position="229"/>
    </location>
</feature>
<feature type="repeat" description="WD 4">
    <location>
        <begin position="232"/>
        <end position="271"/>
    </location>
</feature>
<feature type="repeat" description="WD 5">
    <location>
        <begin position="274"/>
        <end position="333"/>
    </location>
</feature>
<feature type="repeat" description="WD 6">
    <location>
        <begin position="336"/>
        <end position="377"/>
    </location>
</feature>
<feature type="repeat" description="WD 7">
    <location>
        <begin position="378"/>
        <end position="410"/>
    </location>
</feature>
<feature type="region of interest" description="Interaction with NDEL1" evidence="7">
    <location>
        <begin position="1"/>
        <end position="102"/>
    </location>
</feature>
<feature type="region of interest" description="Interaction with NDE1" evidence="7">
    <location>
        <begin position="1"/>
        <end position="66"/>
    </location>
</feature>
<feature type="region of interest" description="Required for self-association and interaction with PAFAH1B2 and PAFAH1B3" evidence="7">
    <location>
        <begin position="1"/>
        <end position="38"/>
    </location>
</feature>
<feature type="region of interest" description="Interaction with dynein and dynactin" evidence="7">
    <location>
        <begin position="83"/>
        <end position="410"/>
    </location>
</feature>
<feature type="region of interest" description="Interaction with DCX" evidence="7">
    <location>
        <begin position="367"/>
        <end position="409"/>
    </location>
</feature>
<feature type="region of interest" description="Interaction with NDEL1" evidence="7">
    <location>
        <begin position="388"/>
        <end position="410"/>
    </location>
</feature>
<feature type="coiled-coil region" evidence="7">
    <location>
        <begin position="56"/>
        <end position="82"/>
    </location>
</feature>
<feature type="modified residue" description="N6-acetyllysine" evidence="2">
    <location>
        <position position="53"/>
    </location>
</feature>
<feature type="modified residue" description="Phosphoserine" evidence="2">
    <location>
        <position position="109"/>
    </location>
</feature>
<keyword id="KW-0007">Acetylation</keyword>
<keyword id="KW-0131">Cell cycle</keyword>
<keyword id="KW-0132">Cell division</keyword>
<keyword id="KW-0175">Coiled coil</keyword>
<keyword id="KW-0963">Cytoplasm</keyword>
<keyword id="KW-0206">Cytoskeleton</keyword>
<keyword id="KW-0217">Developmental protein</keyword>
<keyword id="KW-0221">Differentiation</keyword>
<keyword id="KW-0442">Lipid degradation</keyword>
<keyword id="KW-0443">Lipid metabolism</keyword>
<keyword id="KW-0472">Membrane</keyword>
<keyword id="KW-0493">Microtubule</keyword>
<keyword id="KW-0498">Mitosis</keyword>
<keyword id="KW-0524">Neurogenesis</keyword>
<keyword id="KW-0539">Nucleus</keyword>
<keyword id="KW-0597">Phosphoprotein</keyword>
<keyword id="KW-1185">Reference proteome</keyword>
<keyword id="KW-0677">Repeat</keyword>
<keyword id="KW-0813">Transport</keyword>
<keyword id="KW-0853">WD repeat</keyword>
<organism>
    <name type="scientific">Rattus norvegicus</name>
    <name type="common">Rat</name>
    <dbReference type="NCBI Taxonomy" id="10116"/>
    <lineage>
        <taxon>Eukaryota</taxon>
        <taxon>Metazoa</taxon>
        <taxon>Chordata</taxon>
        <taxon>Craniata</taxon>
        <taxon>Vertebrata</taxon>
        <taxon>Euteleostomi</taxon>
        <taxon>Mammalia</taxon>
        <taxon>Eutheria</taxon>
        <taxon>Euarchontoglires</taxon>
        <taxon>Glires</taxon>
        <taxon>Rodentia</taxon>
        <taxon>Myomorpha</taxon>
        <taxon>Muroidea</taxon>
        <taxon>Muridae</taxon>
        <taxon>Murinae</taxon>
        <taxon>Rattus</taxon>
    </lineage>
</organism>
<dbReference type="EMBL" id="AF016049">
    <property type="protein sequence ID" value="AAC27975.1"/>
    <property type="molecule type" value="mRNA"/>
</dbReference>
<dbReference type="EMBL" id="BC072510">
    <property type="protein sequence ID" value="AAH72510.1"/>
    <property type="molecule type" value="mRNA"/>
</dbReference>
<dbReference type="RefSeq" id="NP_113951.1">
    <property type="nucleotide sequence ID" value="NM_031763.3"/>
</dbReference>
<dbReference type="RefSeq" id="XP_017453039.1">
    <property type="nucleotide sequence ID" value="XM_017597550.1"/>
</dbReference>
<dbReference type="RefSeq" id="XP_038942872.1">
    <property type="nucleotide sequence ID" value="XM_039086944.2"/>
</dbReference>
<dbReference type="RefSeq" id="XP_063126033.1">
    <property type="nucleotide sequence ID" value="XM_063269963.1"/>
</dbReference>
<dbReference type="RefSeq" id="XP_063126034.1">
    <property type="nucleotide sequence ID" value="XM_063269964.1"/>
</dbReference>
<dbReference type="RefSeq" id="XP_063126035.1">
    <property type="nucleotide sequence ID" value="XM_063269965.1"/>
</dbReference>
<dbReference type="RefSeq" id="XP_063126036.1">
    <property type="nucleotide sequence ID" value="XM_063269966.1"/>
</dbReference>
<dbReference type="RefSeq" id="XP_063126037.1">
    <property type="nucleotide sequence ID" value="XM_063269967.1"/>
</dbReference>
<dbReference type="RefSeq" id="XP_063126038.1">
    <property type="nucleotide sequence ID" value="XM_063269968.1"/>
</dbReference>
<dbReference type="RefSeq" id="XP_063126039.1">
    <property type="nucleotide sequence ID" value="XM_063269969.1"/>
</dbReference>
<dbReference type="SMR" id="P63004"/>
<dbReference type="BioGRID" id="249758">
    <property type="interactions" value="2"/>
</dbReference>
<dbReference type="FunCoup" id="P63004">
    <property type="interactions" value="4084"/>
</dbReference>
<dbReference type="IntAct" id="P63004">
    <property type="interactions" value="2"/>
</dbReference>
<dbReference type="MINT" id="P63004"/>
<dbReference type="STRING" id="10116.ENSRNOP00000003696"/>
<dbReference type="iPTMnet" id="P63004"/>
<dbReference type="PhosphoSitePlus" id="P63004"/>
<dbReference type="SwissPalm" id="P63004"/>
<dbReference type="jPOST" id="P63004"/>
<dbReference type="PaxDb" id="10116-ENSRNOP00000003696"/>
<dbReference type="Ensembl" id="ENSRNOT00000003696.7">
    <property type="protein sequence ID" value="ENSRNOP00000003696.4"/>
    <property type="gene ID" value="ENSRNOG00000002755.7"/>
</dbReference>
<dbReference type="GeneID" id="83572"/>
<dbReference type="KEGG" id="rno:83572"/>
<dbReference type="AGR" id="RGD:620331"/>
<dbReference type="CTD" id="5048"/>
<dbReference type="RGD" id="620331">
    <property type="gene designation" value="Pafah1b1"/>
</dbReference>
<dbReference type="eggNOG" id="KOG0295">
    <property type="taxonomic scope" value="Eukaryota"/>
</dbReference>
<dbReference type="GeneTree" id="ENSGT00940000155039"/>
<dbReference type="HOGENOM" id="CLU_000288_57_15_1"/>
<dbReference type="InParanoid" id="P63004"/>
<dbReference type="OMA" id="WHVATKE"/>
<dbReference type="OrthoDB" id="674604at2759"/>
<dbReference type="PhylomeDB" id="P63004"/>
<dbReference type="Reactome" id="R-RNO-141444">
    <property type="pathway name" value="Amplification of signal from unattached kinetochores via a MAD2 inhibitory signal"/>
</dbReference>
<dbReference type="Reactome" id="R-RNO-2467813">
    <property type="pathway name" value="Separation of Sister Chromatids"/>
</dbReference>
<dbReference type="Reactome" id="R-RNO-2500257">
    <property type="pathway name" value="Resolution of Sister Chromatid Cohesion"/>
</dbReference>
<dbReference type="Reactome" id="R-RNO-2565942">
    <property type="pathway name" value="Regulation of PLK1 Activity at G2/M Transition"/>
</dbReference>
<dbReference type="Reactome" id="R-RNO-380259">
    <property type="pathway name" value="Loss of Nlp from mitotic centrosomes"/>
</dbReference>
<dbReference type="Reactome" id="R-RNO-380270">
    <property type="pathway name" value="Recruitment of mitotic centrosome proteins and complexes"/>
</dbReference>
<dbReference type="Reactome" id="R-RNO-380284">
    <property type="pathway name" value="Loss of proteins required for interphase microtubule organization from the centrosome"/>
</dbReference>
<dbReference type="Reactome" id="R-RNO-380320">
    <property type="pathway name" value="Recruitment of NuMA to mitotic centrosomes"/>
</dbReference>
<dbReference type="Reactome" id="R-RNO-5620912">
    <property type="pathway name" value="Anchoring of the basal body to the plasma membrane"/>
</dbReference>
<dbReference type="Reactome" id="R-RNO-5663220">
    <property type="pathway name" value="RHO GTPases Activate Formins"/>
</dbReference>
<dbReference type="Reactome" id="R-RNO-6811436">
    <property type="pathway name" value="COPI-independent Golgi-to-ER retrograde traffic"/>
</dbReference>
<dbReference type="Reactome" id="R-RNO-68877">
    <property type="pathway name" value="Mitotic Prometaphase"/>
</dbReference>
<dbReference type="Reactome" id="R-RNO-8854518">
    <property type="pathway name" value="AURKA Activation by TPX2"/>
</dbReference>
<dbReference type="Reactome" id="R-RNO-9648025">
    <property type="pathway name" value="EML4 and NUDC in mitotic spindle formation"/>
</dbReference>
<dbReference type="PRO" id="PR:P63004"/>
<dbReference type="Proteomes" id="UP000002494">
    <property type="component" value="Chromosome 10"/>
</dbReference>
<dbReference type="Bgee" id="ENSRNOG00000002755">
    <property type="expression patterns" value="Expressed in Ammon's horn and 20 other cell types or tissues"/>
</dbReference>
<dbReference type="GO" id="GO:0008247">
    <property type="term" value="C:1-alkyl-2-acetylglycerophosphocholine esterase complex"/>
    <property type="evidence" value="ECO:0000314"/>
    <property type="project" value="UniProtKB"/>
</dbReference>
<dbReference type="GO" id="GO:0000235">
    <property type="term" value="C:astral microtubule"/>
    <property type="evidence" value="ECO:0000266"/>
    <property type="project" value="RGD"/>
</dbReference>
<dbReference type="GO" id="GO:0030424">
    <property type="term" value="C:axon"/>
    <property type="evidence" value="ECO:0000314"/>
    <property type="project" value="RGD"/>
</dbReference>
<dbReference type="GO" id="GO:1904115">
    <property type="term" value="C:axon cytoplasm"/>
    <property type="evidence" value="ECO:0007669"/>
    <property type="project" value="GOC"/>
</dbReference>
<dbReference type="GO" id="GO:0005938">
    <property type="term" value="C:cell cortex"/>
    <property type="evidence" value="ECO:0000266"/>
    <property type="project" value="RGD"/>
</dbReference>
<dbReference type="GO" id="GO:0031252">
    <property type="term" value="C:cell leading edge"/>
    <property type="evidence" value="ECO:0000266"/>
    <property type="project" value="RGD"/>
</dbReference>
<dbReference type="GO" id="GO:0090724">
    <property type="term" value="C:central region of growth cone"/>
    <property type="evidence" value="ECO:0000314"/>
    <property type="project" value="RGD"/>
</dbReference>
<dbReference type="GO" id="GO:0005813">
    <property type="term" value="C:centrosome"/>
    <property type="evidence" value="ECO:0000266"/>
    <property type="project" value="RGD"/>
</dbReference>
<dbReference type="GO" id="GO:0005737">
    <property type="term" value="C:cytoplasm"/>
    <property type="evidence" value="ECO:0000266"/>
    <property type="project" value="RGD"/>
</dbReference>
<dbReference type="GO" id="GO:0005881">
    <property type="term" value="C:cytoplasmic microtubule"/>
    <property type="evidence" value="ECO:0000318"/>
    <property type="project" value="GO_Central"/>
</dbReference>
<dbReference type="GO" id="GO:0098978">
    <property type="term" value="C:glutamatergic synapse"/>
    <property type="evidence" value="ECO:0000266"/>
    <property type="project" value="RGD"/>
</dbReference>
<dbReference type="GO" id="GO:0030426">
    <property type="term" value="C:growth cone"/>
    <property type="evidence" value="ECO:0000314"/>
    <property type="project" value="RGD"/>
</dbReference>
<dbReference type="GO" id="GO:0005871">
    <property type="term" value="C:kinesin complex"/>
    <property type="evidence" value="ECO:0000314"/>
    <property type="project" value="RGD"/>
</dbReference>
<dbReference type="GO" id="GO:0000776">
    <property type="term" value="C:kinetochore"/>
    <property type="evidence" value="ECO:0000266"/>
    <property type="project" value="RGD"/>
</dbReference>
<dbReference type="GO" id="GO:0005875">
    <property type="term" value="C:microtubule associated complex"/>
    <property type="evidence" value="ECO:0000266"/>
    <property type="project" value="RGD"/>
</dbReference>
<dbReference type="GO" id="GO:0015630">
    <property type="term" value="C:microtubule cytoskeleton"/>
    <property type="evidence" value="ECO:0000266"/>
    <property type="project" value="RGD"/>
</dbReference>
<dbReference type="GO" id="GO:0031514">
    <property type="term" value="C:motile cilium"/>
    <property type="evidence" value="ECO:0000266"/>
    <property type="project" value="RGD"/>
</dbReference>
<dbReference type="GO" id="GO:0043005">
    <property type="term" value="C:neuron projection"/>
    <property type="evidence" value="ECO:0000318"/>
    <property type="project" value="GO_Central"/>
</dbReference>
<dbReference type="GO" id="GO:0043025">
    <property type="term" value="C:neuronal cell body"/>
    <property type="evidence" value="ECO:0000314"/>
    <property type="project" value="RGD"/>
</dbReference>
<dbReference type="GO" id="GO:0005635">
    <property type="term" value="C:nuclear envelope"/>
    <property type="evidence" value="ECO:0000314"/>
    <property type="project" value="MGI"/>
</dbReference>
<dbReference type="GO" id="GO:0031965">
    <property type="term" value="C:nuclear membrane"/>
    <property type="evidence" value="ECO:0007669"/>
    <property type="project" value="UniProtKB-SubCell"/>
</dbReference>
<dbReference type="GO" id="GO:0048471">
    <property type="term" value="C:perinuclear region of cytoplasm"/>
    <property type="evidence" value="ECO:0000266"/>
    <property type="project" value="RGD"/>
</dbReference>
<dbReference type="GO" id="GO:0098685">
    <property type="term" value="C:Schaffer collateral - CA1 synapse"/>
    <property type="evidence" value="ECO:0000266"/>
    <property type="project" value="RGD"/>
</dbReference>
<dbReference type="GO" id="GO:0032420">
    <property type="term" value="C:stereocilium"/>
    <property type="evidence" value="ECO:0000266"/>
    <property type="project" value="RGD"/>
</dbReference>
<dbReference type="GO" id="GO:0031982">
    <property type="term" value="C:vesicle"/>
    <property type="evidence" value="ECO:0000314"/>
    <property type="project" value="RGD"/>
</dbReference>
<dbReference type="GO" id="GO:0070840">
    <property type="term" value="F:dynein complex binding"/>
    <property type="evidence" value="ECO:0000266"/>
    <property type="project" value="RGD"/>
</dbReference>
<dbReference type="GO" id="GO:0045505">
    <property type="term" value="F:dynein intermediate chain binding"/>
    <property type="evidence" value="ECO:0000314"/>
    <property type="project" value="RGD"/>
</dbReference>
<dbReference type="GO" id="GO:0042802">
    <property type="term" value="F:identical protein binding"/>
    <property type="evidence" value="ECO:0000266"/>
    <property type="project" value="RGD"/>
</dbReference>
<dbReference type="GO" id="GO:0008017">
    <property type="term" value="F:microtubule binding"/>
    <property type="evidence" value="ECO:0000266"/>
    <property type="project" value="RGD"/>
</dbReference>
<dbReference type="GO" id="GO:0051010">
    <property type="term" value="F:microtubule plus-end binding"/>
    <property type="evidence" value="ECO:0000318"/>
    <property type="project" value="GO_Central"/>
</dbReference>
<dbReference type="GO" id="GO:0051219">
    <property type="term" value="F:phosphoprotein binding"/>
    <property type="evidence" value="ECO:0000266"/>
    <property type="project" value="RGD"/>
</dbReference>
<dbReference type="GO" id="GO:0047179">
    <property type="term" value="F:platelet-activating factor acetyltransferase activity"/>
    <property type="evidence" value="ECO:0000304"/>
    <property type="project" value="RGD"/>
</dbReference>
<dbReference type="GO" id="GO:0046982">
    <property type="term" value="F:protein heterodimerization activity"/>
    <property type="evidence" value="ECO:0000250"/>
    <property type="project" value="UniProtKB"/>
</dbReference>
<dbReference type="GO" id="GO:0044877">
    <property type="term" value="F:protein-containing complex binding"/>
    <property type="evidence" value="ECO:0000353"/>
    <property type="project" value="RGD"/>
</dbReference>
<dbReference type="GO" id="GO:0001675">
    <property type="term" value="P:acrosome assembly"/>
    <property type="evidence" value="ECO:0000266"/>
    <property type="project" value="RGD"/>
</dbReference>
<dbReference type="GO" id="GO:0030036">
    <property type="term" value="P:actin cytoskeleton organization"/>
    <property type="evidence" value="ECO:0000266"/>
    <property type="project" value="RGD"/>
</dbReference>
<dbReference type="GO" id="GO:0008344">
    <property type="term" value="P:adult locomotory behavior"/>
    <property type="evidence" value="ECO:0000266"/>
    <property type="project" value="RGD"/>
</dbReference>
<dbReference type="GO" id="GO:0001667">
    <property type="term" value="P:ameboidal-type cell migration"/>
    <property type="evidence" value="ECO:0000266"/>
    <property type="project" value="RGD"/>
</dbReference>
<dbReference type="GO" id="GO:0060117">
    <property type="term" value="P:auditory receptor cell development"/>
    <property type="evidence" value="ECO:0000266"/>
    <property type="project" value="RGD"/>
</dbReference>
<dbReference type="GO" id="GO:0048854">
    <property type="term" value="P:brain morphogenesis"/>
    <property type="evidence" value="ECO:0000266"/>
    <property type="project" value="RGD"/>
</dbReference>
<dbReference type="GO" id="GO:0016477">
    <property type="term" value="P:cell migration"/>
    <property type="evidence" value="ECO:0000266"/>
    <property type="project" value="RGD"/>
</dbReference>
<dbReference type="GO" id="GO:0021987">
    <property type="term" value="P:cerebral cortex development"/>
    <property type="evidence" value="ECO:0000266"/>
    <property type="project" value="RGD"/>
</dbReference>
<dbReference type="GO" id="GO:0021895">
    <property type="term" value="P:cerebral cortex neuron differentiation"/>
    <property type="evidence" value="ECO:0000315"/>
    <property type="project" value="RGD"/>
</dbReference>
<dbReference type="GO" id="GO:0007268">
    <property type="term" value="P:chemical synaptic transmission"/>
    <property type="evidence" value="ECO:0000266"/>
    <property type="project" value="RGD"/>
</dbReference>
<dbReference type="GO" id="GO:0090102">
    <property type="term" value="P:cochlea development"/>
    <property type="evidence" value="ECO:0000266"/>
    <property type="project" value="RGD"/>
</dbReference>
<dbReference type="GO" id="GO:0021540">
    <property type="term" value="P:corpus callosum morphogenesis"/>
    <property type="evidence" value="ECO:0000266"/>
    <property type="project" value="RGD"/>
</dbReference>
<dbReference type="GO" id="GO:0043622">
    <property type="term" value="P:cortical microtubule organization"/>
    <property type="evidence" value="ECO:0000266"/>
    <property type="project" value="RGD"/>
</dbReference>
<dbReference type="GO" id="GO:0051660">
    <property type="term" value="P:establishment of centrosome localization"/>
    <property type="evidence" value="ECO:0000315"/>
    <property type="project" value="RGD"/>
</dbReference>
<dbReference type="GO" id="GO:0051649">
    <property type="term" value="P:establishment of localization in cell"/>
    <property type="evidence" value="ECO:0000266"/>
    <property type="project" value="RGD"/>
</dbReference>
<dbReference type="GO" id="GO:0000132">
    <property type="term" value="P:establishment of mitotic spindle orientation"/>
    <property type="evidence" value="ECO:0000266"/>
    <property type="project" value="RGD"/>
</dbReference>
<dbReference type="GO" id="GO:0042249">
    <property type="term" value="P:establishment of planar polarity of embryonic epithelium"/>
    <property type="evidence" value="ECO:0000266"/>
    <property type="project" value="RGD"/>
</dbReference>
<dbReference type="GO" id="GO:0007281">
    <property type="term" value="P:germ cell development"/>
    <property type="evidence" value="ECO:0000318"/>
    <property type="project" value="GO_Central"/>
</dbReference>
<dbReference type="GO" id="GO:0021766">
    <property type="term" value="P:hippocampus development"/>
    <property type="evidence" value="ECO:0000266"/>
    <property type="project" value="RGD"/>
</dbReference>
<dbReference type="GO" id="GO:1904936">
    <property type="term" value="P:interneuron migration"/>
    <property type="evidence" value="ECO:0000266"/>
    <property type="project" value="RGD"/>
</dbReference>
<dbReference type="GO" id="GO:0007254">
    <property type="term" value="P:JNK cascade"/>
    <property type="evidence" value="ECO:0000266"/>
    <property type="project" value="RGD"/>
</dbReference>
<dbReference type="GO" id="GO:0021819">
    <property type="term" value="P:layer formation in cerebral cortex"/>
    <property type="evidence" value="ECO:0000266"/>
    <property type="project" value="RGD"/>
</dbReference>
<dbReference type="GO" id="GO:0007611">
    <property type="term" value="P:learning or memory"/>
    <property type="evidence" value="ECO:0000266"/>
    <property type="project" value="RGD"/>
</dbReference>
<dbReference type="GO" id="GO:0016042">
    <property type="term" value="P:lipid catabolic process"/>
    <property type="evidence" value="ECO:0007669"/>
    <property type="project" value="UniProtKB-KW"/>
</dbReference>
<dbReference type="GO" id="GO:0051661">
    <property type="term" value="P:maintenance of centrosome location"/>
    <property type="evidence" value="ECO:0000266"/>
    <property type="project" value="RGD"/>
</dbReference>
<dbReference type="GO" id="GO:0000226">
    <property type="term" value="P:microtubule cytoskeleton organization"/>
    <property type="evidence" value="ECO:0000266"/>
    <property type="project" value="RGD"/>
</dbReference>
<dbReference type="GO" id="GO:0090176">
    <property type="term" value="P:microtubule cytoskeleton organization involved in establishment of planar polarity"/>
    <property type="evidence" value="ECO:0000266"/>
    <property type="project" value="RGD"/>
</dbReference>
<dbReference type="GO" id="GO:0031023">
    <property type="term" value="P:microtubule organizing center organization"/>
    <property type="evidence" value="ECO:0000266"/>
    <property type="project" value="RGD"/>
</dbReference>
<dbReference type="GO" id="GO:0051012">
    <property type="term" value="P:microtubule sliding"/>
    <property type="evidence" value="ECO:0007669"/>
    <property type="project" value="UniProtKB-UniRule"/>
</dbReference>
<dbReference type="GO" id="GO:0007017">
    <property type="term" value="P:microtubule-based process"/>
    <property type="evidence" value="ECO:0000266"/>
    <property type="project" value="RGD"/>
</dbReference>
<dbReference type="GO" id="GO:0050804">
    <property type="term" value="P:modulation of chemical synaptic transmission"/>
    <property type="evidence" value="ECO:0000266"/>
    <property type="project" value="RGD"/>
</dbReference>
<dbReference type="GO" id="GO:0097529">
    <property type="term" value="P:myeloid leukocyte migration"/>
    <property type="evidence" value="ECO:0000266"/>
    <property type="project" value="RGD"/>
</dbReference>
<dbReference type="GO" id="GO:0046329">
    <property type="term" value="P:negative regulation of JNK cascade"/>
    <property type="evidence" value="ECO:0000266"/>
    <property type="project" value="RGD"/>
</dbReference>
<dbReference type="GO" id="GO:0010977">
    <property type="term" value="P:negative regulation of neuron projection development"/>
    <property type="evidence" value="ECO:0000315"/>
    <property type="project" value="RGD"/>
</dbReference>
<dbReference type="GO" id="GO:0007405">
    <property type="term" value="P:neuroblast proliferation"/>
    <property type="evidence" value="ECO:0000266"/>
    <property type="project" value="RGD"/>
</dbReference>
<dbReference type="GO" id="GO:0050885">
    <property type="term" value="P:neuromuscular process controlling balance"/>
    <property type="evidence" value="ECO:0000266"/>
    <property type="project" value="RGD"/>
</dbReference>
<dbReference type="GO" id="GO:0001764">
    <property type="term" value="P:neuron migration"/>
    <property type="evidence" value="ECO:0000315"/>
    <property type="project" value="RGD"/>
</dbReference>
<dbReference type="GO" id="GO:0051081">
    <property type="term" value="P:nuclear membrane disassembly"/>
    <property type="evidence" value="ECO:0000266"/>
    <property type="project" value="RGD"/>
</dbReference>
<dbReference type="GO" id="GO:0007097">
    <property type="term" value="P:nuclear migration"/>
    <property type="evidence" value="ECO:0000315"/>
    <property type="project" value="RGD"/>
</dbReference>
<dbReference type="GO" id="GO:0036035">
    <property type="term" value="P:osteoclast development"/>
    <property type="evidence" value="ECO:0000266"/>
    <property type="project" value="RGD"/>
</dbReference>
<dbReference type="GO" id="GO:0045773">
    <property type="term" value="P:positive regulation of axon extension"/>
    <property type="evidence" value="ECO:0000315"/>
    <property type="project" value="RGD"/>
</dbReference>
<dbReference type="GO" id="GO:0051130">
    <property type="term" value="P:positive regulation of cellular component organization"/>
    <property type="evidence" value="ECO:0000266"/>
    <property type="project" value="RGD"/>
</dbReference>
<dbReference type="GO" id="GO:0001961">
    <property type="term" value="P:positive regulation of cytokine-mediated signaling pathway"/>
    <property type="evidence" value="ECO:0000266"/>
    <property type="project" value="RGD"/>
</dbReference>
<dbReference type="GO" id="GO:0061003">
    <property type="term" value="P:positive regulation of dendritic spine morphogenesis"/>
    <property type="evidence" value="ECO:0000266"/>
    <property type="project" value="RGD"/>
</dbReference>
<dbReference type="GO" id="GO:0040019">
    <property type="term" value="P:positive regulation of embryonic development"/>
    <property type="evidence" value="ECO:0000266"/>
    <property type="project" value="RGD"/>
</dbReference>
<dbReference type="GO" id="GO:0045931">
    <property type="term" value="P:positive regulation of mitotic cell cycle"/>
    <property type="evidence" value="ECO:0000315"/>
    <property type="project" value="RGD"/>
</dbReference>
<dbReference type="GO" id="GO:0009306">
    <property type="term" value="P:protein secretion"/>
    <property type="evidence" value="ECO:0000266"/>
    <property type="project" value="RGD"/>
</dbReference>
<dbReference type="GO" id="GO:0140650">
    <property type="term" value="P:radial glia-guided pyramidal neuron migration"/>
    <property type="evidence" value="ECO:0000266"/>
    <property type="project" value="RGD"/>
</dbReference>
<dbReference type="GO" id="GO:0038026">
    <property type="term" value="P:reelin-mediated signaling pathway"/>
    <property type="evidence" value="ECO:0000250"/>
    <property type="project" value="UniProtKB"/>
</dbReference>
<dbReference type="GO" id="GO:0070507">
    <property type="term" value="P:regulation of microtubule cytoskeleton organization"/>
    <property type="evidence" value="ECO:0000266"/>
    <property type="project" value="RGD"/>
</dbReference>
<dbReference type="GO" id="GO:0099175">
    <property type="term" value="P:regulation of postsynapse organization"/>
    <property type="evidence" value="ECO:0000266"/>
    <property type="project" value="RGD"/>
</dbReference>
<dbReference type="GO" id="GO:0008090">
    <property type="term" value="P:retrograde axonal transport"/>
    <property type="evidence" value="ECO:0000266"/>
    <property type="project" value="RGD"/>
</dbReference>
<dbReference type="GO" id="GO:0017145">
    <property type="term" value="P:stem cell division"/>
    <property type="evidence" value="ECO:0000315"/>
    <property type="project" value="RGD"/>
</dbReference>
<dbReference type="GO" id="GO:0019226">
    <property type="term" value="P:transmission of nerve impulse"/>
    <property type="evidence" value="ECO:0000266"/>
    <property type="project" value="RGD"/>
</dbReference>
<dbReference type="GO" id="GO:0047496">
    <property type="term" value="P:vesicle transport along microtubule"/>
    <property type="evidence" value="ECO:0000266"/>
    <property type="project" value="RGD"/>
</dbReference>
<dbReference type="CDD" id="cd00200">
    <property type="entry name" value="WD40"/>
    <property type="match status" value="1"/>
</dbReference>
<dbReference type="FunFam" id="2.130.10.10:FF:000038">
    <property type="entry name" value="Lissencephaly-1 homolog B"/>
    <property type="match status" value="1"/>
</dbReference>
<dbReference type="FunFam" id="1.20.960.30:FF:000002">
    <property type="entry name" value="Platelet-activating factor acetylhydrolase ib"/>
    <property type="match status" value="1"/>
</dbReference>
<dbReference type="Gene3D" id="1.20.960.30">
    <property type="match status" value="1"/>
</dbReference>
<dbReference type="Gene3D" id="2.130.10.10">
    <property type="entry name" value="YVTN repeat-like/Quinoprotein amine dehydrogenase"/>
    <property type="match status" value="1"/>
</dbReference>
<dbReference type="HAMAP" id="MF_03141">
    <property type="entry name" value="lis1"/>
    <property type="match status" value="1"/>
</dbReference>
<dbReference type="InterPro" id="IPR017252">
    <property type="entry name" value="Dynein_regulator_LIS1"/>
</dbReference>
<dbReference type="InterPro" id="IPR020472">
    <property type="entry name" value="G-protein_beta_WD-40_rep"/>
</dbReference>
<dbReference type="InterPro" id="IPR037190">
    <property type="entry name" value="LIS1_N"/>
</dbReference>
<dbReference type="InterPro" id="IPR006594">
    <property type="entry name" value="LisH"/>
</dbReference>
<dbReference type="InterPro" id="IPR056795">
    <property type="entry name" value="PAC1-like_LisH-like_dom"/>
</dbReference>
<dbReference type="InterPro" id="IPR015943">
    <property type="entry name" value="WD40/YVTN_repeat-like_dom_sf"/>
</dbReference>
<dbReference type="InterPro" id="IPR019775">
    <property type="entry name" value="WD40_repeat_CS"/>
</dbReference>
<dbReference type="InterPro" id="IPR036322">
    <property type="entry name" value="WD40_repeat_dom_sf"/>
</dbReference>
<dbReference type="InterPro" id="IPR001680">
    <property type="entry name" value="WD40_rpt"/>
</dbReference>
<dbReference type="InterPro" id="IPR050349">
    <property type="entry name" value="WD_LIS1/nudF_dynein_reg"/>
</dbReference>
<dbReference type="PANTHER" id="PTHR44129">
    <property type="entry name" value="WD REPEAT-CONTAINING PROTEIN POP1"/>
    <property type="match status" value="1"/>
</dbReference>
<dbReference type="Pfam" id="PF24951">
    <property type="entry name" value="LisH_PAC1"/>
    <property type="match status" value="1"/>
</dbReference>
<dbReference type="Pfam" id="PF00400">
    <property type="entry name" value="WD40"/>
    <property type="match status" value="7"/>
</dbReference>
<dbReference type="PIRSF" id="PIRSF037647">
    <property type="entry name" value="Dynein_regulator_Lis1"/>
    <property type="match status" value="1"/>
</dbReference>
<dbReference type="PRINTS" id="PR00320">
    <property type="entry name" value="GPROTEINBRPT"/>
</dbReference>
<dbReference type="SMART" id="SM00667">
    <property type="entry name" value="LisH"/>
    <property type="match status" value="1"/>
</dbReference>
<dbReference type="SMART" id="SM00320">
    <property type="entry name" value="WD40"/>
    <property type="match status" value="7"/>
</dbReference>
<dbReference type="SUPFAM" id="SSF109925">
    <property type="entry name" value="Lissencephaly-1 protein (Lis-1, PAF-AH alpha) N-terminal domain"/>
    <property type="match status" value="1"/>
</dbReference>
<dbReference type="SUPFAM" id="SSF50978">
    <property type="entry name" value="WD40 repeat-like"/>
    <property type="match status" value="1"/>
</dbReference>
<dbReference type="PROSITE" id="PS50896">
    <property type="entry name" value="LISH"/>
    <property type="match status" value="1"/>
</dbReference>
<dbReference type="PROSITE" id="PS00678">
    <property type="entry name" value="WD_REPEATS_1"/>
    <property type="match status" value="4"/>
</dbReference>
<dbReference type="PROSITE" id="PS50082">
    <property type="entry name" value="WD_REPEATS_2"/>
    <property type="match status" value="7"/>
</dbReference>
<dbReference type="PROSITE" id="PS50294">
    <property type="entry name" value="WD_REPEATS_REGION"/>
    <property type="match status" value="1"/>
</dbReference>
<proteinExistence type="evidence at protein level"/>
<gene>
    <name evidence="17" type="primary">Pafah1b1</name>
    <name type="synonym">Lis-1</name>
    <name type="synonym">Lis1</name>
    <name type="synonym">Pafaha</name>
</gene>
<sequence>MVLSQRQRDELNRAIADYLRSNGYEEAYSVFKKEAELDMNEELDKKYAGLLEKKWTSVIRLQKKVMELESKLNEAKEEFTSGGPLGQKRDPKEWIPRPPEKYALSGHRSPVTRVIFHPVFSVMVSASEDATIKVWDYETGDFERTLKGHTDSVQDISFDHSGKLLASCSADMTIKLWDFQGFECIRTMHGHDHNVSSVAIMPNGDHIVSASRDKTIKMWEVQTGYCVKTFTGHREWVRMVRPNQDGTLIASCSNDQTVRVWVVATKECKAELREHEHVVECISWAPESSYSSISEATGSETKKSGKPGPFLLSGSRDKTIKMWDVSTGMCLMTLVGHDNWVRGVLFHSGGKFILSCADDKTLRVWDYKNKRCMKTLNAHEHFVTSLDFHKTAPYVVTGSVDQTVKVWECR</sequence>
<name>LIS1_RAT</name>